<keyword id="KW-0963">Cytoplasm</keyword>
<keyword id="KW-0489">Methyltransferase</keyword>
<keyword id="KW-0698">rRNA processing</keyword>
<keyword id="KW-0949">S-adenosyl-L-methionine</keyword>
<keyword id="KW-0808">Transferase</keyword>
<dbReference type="EC" id="2.1.1.166" evidence="1"/>
<dbReference type="EMBL" id="CP000450">
    <property type="protein sequence ID" value="ABI59256.1"/>
    <property type="molecule type" value="Genomic_DNA"/>
</dbReference>
<dbReference type="RefSeq" id="WP_011634079.1">
    <property type="nucleotide sequence ID" value="NC_008344.1"/>
</dbReference>
<dbReference type="SMR" id="Q0AHC6"/>
<dbReference type="STRING" id="335283.Neut_0997"/>
<dbReference type="KEGG" id="net:Neut_0997"/>
<dbReference type="eggNOG" id="COG0293">
    <property type="taxonomic scope" value="Bacteria"/>
</dbReference>
<dbReference type="HOGENOM" id="CLU_009422_4_0_4"/>
<dbReference type="OrthoDB" id="9790080at2"/>
<dbReference type="Proteomes" id="UP000001966">
    <property type="component" value="Chromosome"/>
</dbReference>
<dbReference type="GO" id="GO:0005737">
    <property type="term" value="C:cytoplasm"/>
    <property type="evidence" value="ECO:0007669"/>
    <property type="project" value="UniProtKB-SubCell"/>
</dbReference>
<dbReference type="GO" id="GO:0008650">
    <property type="term" value="F:rRNA (uridine-2'-O-)-methyltransferase activity"/>
    <property type="evidence" value="ECO:0007669"/>
    <property type="project" value="UniProtKB-UniRule"/>
</dbReference>
<dbReference type="FunFam" id="3.40.50.150:FF:000005">
    <property type="entry name" value="Ribosomal RNA large subunit methyltransferase E"/>
    <property type="match status" value="1"/>
</dbReference>
<dbReference type="Gene3D" id="3.40.50.150">
    <property type="entry name" value="Vaccinia Virus protein VP39"/>
    <property type="match status" value="1"/>
</dbReference>
<dbReference type="HAMAP" id="MF_01547">
    <property type="entry name" value="RNA_methyltr_E"/>
    <property type="match status" value="1"/>
</dbReference>
<dbReference type="InterPro" id="IPR050082">
    <property type="entry name" value="RNA_methyltr_RlmE"/>
</dbReference>
<dbReference type="InterPro" id="IPR002877">
    <property type="entry name" value="RNA_MeTrfase_FtsJ_dom"/>
</dbReference>
<dbReference type="InterPro" id="IPR015507">
    <property type="entry name" value="rRNA-MeTfrase_E"/>
</dbReference>
<dbReference type="InterPro" id="IPR029063">
    <property type="entry name" value="SAM-dependent_MTases_sf"/>
</dbReference>
<dbReference type="PANTHER" id="PTHR10920">
    <property type="entry name" value="RIBOSOMAL RNA METHYLTRANSFERASE"/>
    <property type="match status" value="1"/>
</dbReference>
<dbReference type="PANTHER" id="PTHR10920:SF18">
    <property type="entry name" value="RRNA METHYLTRANSFERASE 2, MITOCHONDRIAL"/>
    <property type="match status" value="1"/>
</dbReference>
<dbReference type="Pfam" id="PF01728">
    <property type="entry name" value="FtsJ"/>
    <property type="match status" value="1"/>
</dbReference>
<dbReference type="PIRSF" id="PIRSF005461">
    <property type="entry name" value="23S_rRNA_mtase"/>
    <property type="match status" value="1"/>
</dbReference>
<dbReference type="SUPFAM" id="SSF53335">
    <property type="entry name" value="S-adenosyl-L-methionine-dependent methyltransferases"/>
    <property type="match status" value="1"/>
</dbReference>
<reference key="1">
    <citation type="journal article" date="2007" name="Environ. Microbiol.">
        <title>Whole-genome analysis of the ammonia-oxidizing bacterium, Nitrosomonas eutropha C91: implications for niche adaptation.</title>
        <authorList>
            <person name="Stein L.Y."/>
            <person name="Arp D.J."/>
            <person name="Berube P.M."/>
            <person name="Chain P.S."/>
            <person name="Hauser L."/>
            <person name="Jetten M.S."/>
            <person name="Klotz M.G."/>
            <person name="Larimer F.W."/>
            <person name="Norton J.M."/>
            <person name="Op den Camp H.J.M."/>
            <person name="Shin M."/>
            <person name="Wei X."/>
        </authorList>
    </citation>
    <scope>NUCLEOTIDE SEQUENCE [LARGE SCALE GENOMIC DNA]</scope>
    <source>
        <strain>DSM 101675 / C91 / Nm57</strain>
    </source>
</reference>
<comment type="function">
    <text evidence="1">Specifically methylates the uridine in position 2552 of 23S rRNA at the 2'-O position of the ribose in the fully assembled 50S ribosomal subunit.</text>
</comment>
<comment type="catalytic activity">
    <reaction evidence="1">
        <text>uridine(2552) in 23S rRNA + S-adenosyl-L-methionine = 2'-O-methyluridine(2552) in 23S rRNA + S-adenosyl-L-homocysteine + H(+)</text>
        <dbReference type="Rhea" id="RHEA:42720"/>
        <dbReference type="Rhea" id="RHEA-COMP:10202"/>
        <dbReference type="Rhea" id="RHEA-COMP:10203"/>
        <dbReference type="ChEBI" id="CHEBI:15378"/>
        <dbReference type="ChEBI" id="CHEBI:57856"/>
        <dbReference type="ChEBI" id="CHEBI:59789"/>
        <dbReference type="ChEBI" id="CHEBI:65315"/>
        <dbReference type="ChEBI" id="CHEBI:74478"/>
        <dbReference type="EC" id="2.1.1.166"/>
    </reaction>
</comment>
<comment type="subcellular location">
    <subcellularLocation>
        <location evidence="1">Cytoplasm</location>
    </subcellularLocation>
</comment>
<comment type="similarity">
    <text evidence="1">Belongs to the class I-like SAM-binding methyltransferase superfamily. RNA methyltransferase RlmE family.</text>
</comment>
<protein>
    <recommendedName>
        <fullName evidence="1">Ribosomal RNA large subunit methyltransferase E</fullName>
        <ecNumber evidence="1">2.1.1.166</ecNumber>
    </recommendedName>
    <alternativeName>
        <fullName evidence="1">23S rRNA Um2552 methyltransferase</fullName>
    </alternativeName>
    <alternativeName>
        <fullName evidence="1">rRNA (uridine-2'-O-)-methyltransferase</fullName>
    </alternativeName>
</protein>
<proteinExistence type="inferred from homology"/>
<name>RLME_NITEC</name>
<gene>
    <name evidence="1" type="primary">rlmE</name>
    <name evidence="1" type="synonym">ftsJ</name>
    <name evidence="1" type="synonym">rrmJ</name>
    <name type="ordered locus">Neut_0997</name>
</gene>
<sequence length="206" mass="22892">MKSARTSRAWIKAHINDNFVRKANHEGYRSRAAYKLQEIAERDALFSPGMTVVDLGASPGSWSQVALESVGPTGKVFALDMLDMQSLPGATFIQGDFRENGVLAALEKVLDGKRADLVISDMSPNLTGIRVSDQAHGMYLAELALMFCREHLNPGENFLVKVFQGSDFEAFRQLMQADFAKVVIRKPKASRDRSKELYLLGLEKII</sequence>
<feature type="chain" id="PRO_0000282767" description="Ribosomal RNA large subunit methyltransferase E">
    <location>
        <begin position="1"/>
        <end position="206"/>
    </location>
</feature>
<feature type="active site" description="Proton acceptor" evidence="1">
    <location>
        <position position="161"/>
    </location>
</feature>
<feature type="binding site" evidence="1">
    <location>
        <position position="60"/>
    </location>
    <ligand>
        <name>S-adenosyl-L-methionine</name>
        <dbReference type="ChEBI" id="CHEBI:59789"/>
    </ligand>
</feature>
<feature type="binding site" evidence="1">
    <location>
        <position position="62"/>
    </location>
    <ligand>
        <name>S-adenosyl-L-methionine</name>
        <dbReference type="ChEBI" id="CHEBI:59789"/>
    </ligand>
</feature>
<feature type="binding site" evidence="1">
    <location>
        <position position="80"/>
    </location>
    <ligand>
        <name>S-adenosyl-L-methionine</name>
        <dbReference type="ChEBI" id="CHEBI:59789"/>
    </ligand>
</feature>
<feature type="binding site" evidence="1">
    <location>
        <position position="96"/>
    </location>
    <ligand>
        <name>S-adenosyl-L-methionine</name>
        <dbReference type="ChEBI" id="CHEBI:59789"/>
    </ligand>
</feature>
<feature type="binding site" evidence="1">
    <location>
        <position position="121"/>
    </location>
    <ligand>
        <name>S-adenosyl-L-methionine</name>
        <dbReference type="ChEBI" id="CHEBI:59789"/>
    </ligand>
</feature>
<accession>Q0AHC6</accession>
<evidence type="ECO:0000255" key="1">
    <source>
        <dbReference type="HAMAP-Rule" id="MF_01547"/>
    </source>
</evidence>
<organism>
    <name type="scientific">Nitrosomonas eutropha (strain DSM 101675 / C91 / Nm57)</name>
    <dbReference type="NCBI Taxonomy" id="335283"/>
    <lineage>
        <taxon>Bacteria</taxon>
        <taxon>Pseudomonadati</taxon>
        <taxon>Pseudomonadota</taxon>
        <taxon>Betaproteobacteria</taxon>
        <taxon>Nitrosomonadales</taxon>
        <taxon>Nitrosomonadaceae</taxon>
        <taxon>Nitrosomonas</taxon>
    </lineage>
</organism>